<reference key="1">
    <citation type="journal article" date="2011" name="MBio">
        <title>Novel metabolic attributes of the genus Cyanothece, comprising a group of unicellular nitrogen-fixing Cyanobacteria.</title>
        <authorList>
            <person name="Bandyopadhyay A."/>
            <person name="Elvitigala T."/>
            <person name="Welsh E."/>
            <person name="Stockel J."/>
            <person name="Liberton M."/>
            <person name="Min H."/>
            <person name="Sherman L.A."/>
            <person name="Pakrasi H.B."/>
        </authorList>
    </citation>
    <scope>NUCLEOTIDE SEQUENCE [LARGE SCALE GENOMIC DNA]</scope>
    <source>
        <strain>PCC 7424</strain>
    </source>
</reference>
<organism>
    <name type="scientific">Gloeothece citriformis (strain PCC 7424)</name>
    <name type="common">Cyanothece sp. (strain PCC 7424)</name>
    <dbReference type="NCBI Taxonomy" id="65393"/>
    <lineage>
        <taxon>Bacteria</taxon>
        <taxon>Bacillati</taxon>
        <taxon>Cyanobacteriota</taxon>
        <taxon>Cyanophyceae</taxon>
        <taxon>Oscillatoriophycideae</taxon>
        <taxon>Chroococcales</taxon>
        <taxon>Aphanothecaceae</taxon>
        <taxon>Gloeothece</taxon>
        <taxon>Gloeothece citriformis</taxon>
    </lineage>
</organism>
<name>SYGA_GLOC7</name>
<dbReference type="EC" id="6.1.1.14" evidence="1"/>
<dbReference type="EMBL" id="CP001291">
    <property type="protein sequence ID" value="ACK72042.1"/>
    <property type="molecule type" value="Genomic_DNA"/>
</dbReference>
<dbReference type="RefSeq" id="WP_015955635.1">
    <property type="nucleotide sequence ID" value="NC_011729.1"/>
</dbReference>
<dbReference type="SMR" id="B7KHU5"/>
<dbReference type="STRING" id="65393.PCC7424_3659"/>
<dbReference type="KEGG" id="cyc:PCC7424_3659"/>
<dbReference type="eggNOG" id="COG0752">
    <property type="taxonomic scope" value="Bacteria"/>
</dbReference>
<dbReference type="HOGENOM" id="CLU_057066_1_0_3"/>
<dbReference type="OrthoDB" id="9802183at2"/>
<dbReference type="Proteomes" id="UP000002384">
    <property type="component" value="Chromosome"/>
</dbReference>
<dbReference type="GO" id="GO:0005829">
    <property type="term" value="C:cytosol"/>
    <property type="evidence" value="ECO:0007669"/>
    <property type="project" value="TreeGrafter"/>
</dbReference>
<dbReference type="GO" id="GO:0005524">
    <property type="term" value="F:ATP binding"/>
    <property type="evidence" value="ECO:0007669"/>
    <property type="project" value="UniProtKB-UniRule"/>
</dbReference>
<dbReference type="GO" id="GO:0004820">
    <property type="term" value="F:glycine-tRNA ligase activity"/>
    <property type="evidence" value="ECO:0007669"/>
    <property type="project" value="UniProtKB-UniRule"/>
</dbReference>
<dbReference type="GO" id="GO:0006426">
    <property type="term" value="P:glycyl-tRNA aminoacylation"/>
    <property type="evidence" value="ECO:0007669"/>
    <property type="project" value="UniProtKB-UniRule"/>
</dbReference>
<dbReference type="CDD" id="cd00733">
    <property type="entry name" value="GlyRS_alpha_core"/>
    <property type="match status" value="1"/>
</dbReference>
<dbReference type="FunFam" id="3.30.930.10:FF:000006">
    <property type="entry name" value="Glycine--tRNA ligase alpha subunit"/>
    <property type="match status" value="1"/>
</dbReference>
<dbReference type="Gene3D" id="3.30.930.10">
    <property type="entry name" value="Bira Bifunctional Protein, Domain 2"/>
    <property type="match status" value="1"/>
</dbReference>
<dbReference type="Gene3D" id="1.20.58.180">
    <property type="entry name" value="Class II aaRS and biotin synthetases, domain 2"/>
    <property type="match status" value="1"/>
</dbReference>
<dbReference type="HAMAP" id="MF_00254">
    <property type="entry name" value="Gly_tRNA_synth_alpha"/>
    <property type="match status" value="1"/>
</dbReference>
<dbReference type="InterPro" id="IPR045864">
    <property type="entry name" value="aa-tRNA-synth_II/BPL/LPL"/>
</dbReference>
<dbReference type="InterPro" id="IPR006194">
    <property type="entry name" value="Gly-tRNA-synth_heterodimer"/>
</dbReference>
<dbReference type="InterPro" id="IPR002310">
    <property type="entry name" value="Gly-tRNA_ligase_asu"/>
</dbReference>
<dbReference type="NCBIfam" id="TIGR00388">
    <property type="entry name" value="glyQ"/>
    <property type="match status" value="1"/>
</dbReference>
<dbReference type="NCBIfam" id="NF006827">
    <property type="entry name" value="PRK09348.1"/>
    <property type="match status" value="1"/>
</dbReference>
<dbReference type="PANTHER" id="PTHR30075:SF2">
    <property type="entry name" value="GLYCINE--TRNA LIGASE, CHLOROPLASTIC_MITOCHONDRIAL 2"/>
    <property type="match status" value="1"/>
</dbReference>
<dbReference type="PANTHER" id="PTHR30075">
    <property type="entry name" value="GLYCYL-TRNA SYNTHETASE"/>
    <property type="match status" value="1"/>
</dbReference>
<dbReference type="Pfam" id="PF02091">
    <property type="entry name" value="tRNA-synt_2e"/>
    <property type="match status" value="1"/>
</dbReference>
<dbReference type="PRINTS" id="PR01044">
    <property type="entry name" value="TRNASYNTHGA"/>
</dbReference>
<dbReference type="SUPFAM" id="SSF55681">
    <property type="entry name" value="Class II aaRS and biotin synthetases"/>
    <property type="match status" value="1"/>
</dbReference>
<dbReference type="PROSITE" id="PS50861">
    <property type="entry name" value="AA_TRNA_LIGASE_II_GLYAB"/>
    <property type="match status" value="1"/>
</dbReference>
<proteinExistence type="inferred from homology"/>
<protein>
    <recommendedName>
        <fullName evidence="1">Glycine--tRNA ligase alpha subunit</fullName>
        <ecNumber evidence="1">6.1.1.14</ecNumber>
    </recommendedName>
    <alternativeName>
        <fullName evidence="1">Glycyl-tRNA synthetase alpha subunit</fullName>
        <shortName evidence="1">GlyRS</shortName>
    </alternativeName>
</protein>
<comment type="catalytic activity">
    <reaction evidence="1">
        <text>tRNA(Gly) + glycine + ATP = glycyl-tRNA(Gly) + AMP + diphosphate</text>
        <dbReference type="Rhea" id="RHEA:16013"/>
        <dbReference type="Rhea" id="RHEA-COMP:9664"/>
        <dbReference type="Rhea" id="RHEA-COMP:9683"/>
        <dbReference type="ChEBI" id="CHEBI:30616"/>
        <dbReference type="ChEBI" id="CHEBI:33019"/>
        <dbReference type="ChEBI" id="CHEBI:57305"/>
        <dbReference type="ChEBI" id="CHEBI:78442"/>
        <dbReference type="ChEBI" id="CHEBI:78522"/>
        <dbReference type="ChEBI" id="CHEBI:456215"/>
        <dbReference type="EC" id="6.1.1.14"/>
    </reaction>
</comment>
<comment type="subunit">
    <text evidence="1">Tetramer of two alpha and two beta subunits.</text>
</comment>
<comment type="subcellular location">
    <subcellularLocation>
        <location evidence="1">Cytoplasm</location>
    </subcellularLocation>
</comment>
<comment type="similarity">
    <text evidence="1">Belongs to the class-II aminoacyl-tRNA synthetase family.</text>
</comment>
<feature type="chain" id="PRO_1000197172" description="Glycine--tRNA ligase alpha subunit">
    <location>
        <begin position="1"/>
        <end position="298"/>
    </location>
</feature>
<evidence type="ECO:0000255" key="1">
    <source>
        <dbReference type="HAMAP-Rule" id="MF_00254"/>
    </source>
</evidence>
<sequence length="298" mass="34326">MSITFQSIIAKLHEFWSARGCLIAQPYDTEKGAGTMSPHTFLRAIGPEPWSVAYVEPCRRPTDGRYGENPNRFQHYYQYQVLIKPSPDNIQEIYLDSLRSLGIHPEDHDIRFVEDNWESPTLGAWGVGWEVWLDGMEITQFTYFQQCGGIDCRPVSIEITYGLERLAMYLQNVDAITKIQWNDQVNYGEIFLQNEIEQSTYNFEASTPDLLFNLFSLYEQEAKQLIERGLVIPSLDYVLKCSHSFNLLDARGVIAVAERTRYIGRIRNLAREVAQLYLQQRENLGFPLEPVQAALING</sequence>
<keyword id="KW-0030">Aminoacyl-tRNA synthetase</keyword>
<keyword id="KW-0067">ATP-binding</keyword>
<keyword id="KW-0963">Cytoplasm</keyword>
<keyword id="KW-0436">Ligase</keyword>
<keyword id="KW-0547">Nucleotide-binding</keyword>
<keyword id="KW-0648">Protein biosynthesis</keyword>
<keyword id="KW-1185">Reference proteome</keyword>
<accession>B7KHU5</accession>
<gene>
    <name evidence="1" type="primary">glyQ</name>
    <name type="ordered locus">PCC7424_3659</name>
</gene>